<accession>Q82VR4</accession>
<feature type="chain" id="PRO_0000092851" description="Phosphate import ATP-binding protein PstB">
    <location>
        <begin position="1"/>
        <end position="266"/>
    </location>
</feature>
<feature type="domain" description="ABC transporter" evidence="1">
    <location>
        <begin position="15"/>
        <end position="261"/>
    </location>
</feature>
<feature type="binding site" evidence="1">
    <location>
        <begin position="50"/>
        <end position="57"/>
    </location>
    <ligand>
        <name>ATP</name>
        <dbReference type="ChEBI" id="CHEBI:30616"/>
    </ligand>
</feature>
<proteinExistence type="inferred from homology"/>
<sequence>MQIFKPASGHTHSTVQKSVVNKLNFYYGGYQALKNIDMMVYEKQVTALIGPSGCGKSTFLRCFNRMHDLYPRNHYEGEIILHPDNANILSPEVDPIEVRMRISMVFQKPNPFPKSIFENVAYGLRIRGVKRRSILEERVENALRNAALWEEVKDRLGDLAFNLSGGQQQRLCIARALATDPEILLFDEPTSALDPIATASIEELISDLRNKVTILIVTHNMQQAARVSDYTAYMYMGELIEFGATDTIFIKPKNKQTEDYITGRFG</sequence>
<comment type="function">
    <text evidence="1">Part of the ABC transporter complex PstSACB involved in phosphate import. Responsible for energy coupling to the transport system.</text>
</comment>
<comment type="catalytic activity">
    <reaction evidence="1">
        <text>phosphate(out) + ATP + H2O = ADP + 2 phosphate(in) + H(+)</text>
        <dbReference type="Rhea" id="RHEA:24440"/>
        <dbReference type="ChEBI" id="CHEBI:15377"/>
        <dbReference type="ChEBI" id="CHEBI:15378"/>
        <dbReference type="ChEBI" id="CHEBI:30616"/>
        <dbReference type="ChEBI" id="CHEBI:43474"/>
        <dbReference type="ChEBI" id="CHEBI:456216"/>
        <dbReference type="EC" id="7.3.2.1"/>
    </reaction>
</comment>
<comment type="subunit">
    <text evidence="1">The complex is composed of two ATP-binding proteins (PstB), two transmembrane proteins (PstC and PstA) and a solute-binding protein (PstS).</text>
</comment>
<comment type="subcellular location">
    <subcellularLocation>
        <location evidence="1">Cell inner membrane</location>
        <topology evidence="1">Peripheral membrane protein</topology>
    </subcellularLocation>
</comment>
<comment type="similarity">
    <text evidence="1">Belongs to the ABC transporter superfamily. Phosphate importer (TC 3.A.1.7) family.</text>
</comment>
<gene>
    <name evidence="1" type="primary">pstB</name>
    <name type="ordered locus">NE1001</name>
</gene>
<protein>
    <recommendedName>
        <fullName evidence="1">Phosphate import ATP-binding protein PstB</fullName>
        <ecNumber evidence="1">7.3.2.1</ecNumber>
    </recommendedName>
    <alternativeName>
        <fullName evidence="1">ABC phosphate transporter</fullName>
    </alternativeName>
    <alternativeName>
        <fullName evidence="1">Phosphate-transporting ATPase</fullName>
    </alternativeName>
</protein>
<evidence type="ECO:0000255" key="1">
    <source>
        <dbReference type="HAMAP-Rule" id="MF_01702"/>
    </source>
</evidence>
<keyword id="KW-0067">ATP-binding</keyword>
<keyword id="KW-0997">Cell inner membrane</keyword>
<keyword id="KW-1003">Cell membrane</keyword>
<keyword id="KW-0472">Membrane</keyword>
<keyword id="KW-0547">Nucleotide-binding</keyword>
<keyword id="KW-0592">Phosphate transport</keyword>
<keyword id="KW-1185">Reference proteome</keyword>
<keyword id="KW-1278">Translocase</keyword>
<keyword id="KW-0813">Transport</keyword>
<organism>
    <name type="scientific">Nitrosomonas europaea (strain ATCC 19718 / CIP 103999 / KCTC 2705 / NBRC 14298)</name>
    <dbReference type="NCBI Taxonomy" id="228410"/>
    <lineage>
        <taxon>Bacteria</taxon>
        <taxon>Pseudomonadati</taxon>
        <taxon>Pseudomonadota</taxon>
        <taxon>Betaproteobacteria</taxon>
        <taxon>Nitrosomonadales</taxon>
        <taxon>Nitrosomonadaceae</taxon>
        <taxon>Nitrosomonas</taxon>
    </lineage>
</organism>
<dbReference type="EC" id="7.3.2.1" evidence="1"/>
<dbReference type="EMBL" id="AL954747">
    <property type="protein sequence ID" value="CAD84912.1"/>
    <property type="molecule type" value="Genomic_DNA"/>
</dbReference>
<dbReference type="RefSeq" id="WP_011111610.1">
    <property type="nucleotide sequence ID" value="NC_004757.1"/>
</dbReference>
<dbReference type="SMR" id="Q82VR4"/>
<dbReference type="STRING" id="228410.NE1001"/>
<dbReference type="GeneID" id="87104192"/>
<dbReference type="KEGG" id="neu:NE1001"/>
<dbReference type="eggNOG" id="COG1117">
    <property type="taxonomic scope" value="Bacteria"/>
</dbReference>
<dbReference type="HOGENOM" id="CLU_000604_1_22_4"/>
<dbReference type="OrthoDB" id="9802264at2"/>
<dbReference type="PhylomeDB" id="Q82VR4"/>
<dbReference type="Proteomes" id="UP000001416">
    <property type="component" value="Chromosome"/>
</dbReference>
<dbReference type="GO" id="GO:0005886">
    <property type="term" value="C:plasma membrane"/>
    <property type="evidence" value="ECO:0007669"/>
    <property type="project" value="UniProtKB-SubCell"/>
</dbReference>
<dbReference type="GO" id="GO:0005524">
    <property type="term" value="F:ATP binding"/>
    <property type="evidence" value="ECO:0007669"/>
    <property type="project" value="UniProtKB-KW"/>
</dbReference>
<dbReference type="GO" id="GO:0016887">
    <property type="term" value="F:ATP hydrolysis activity"/>
    <property type="evidence" value="ECO:0007669"/>
    <property type="project" value="InterPro"/>
</dbReference>
<dbReference type="GO" id="GO:0015415">
    <property type="term" value="F:ATPase-coupled phosphate ion transmembrane transporter activity"/>
    <property type="evidence" value="ECO:0007669"/>
    <property type="project" value="UniProtKB-EC"/>
</dbReference>
<dbReference type="GO" id="GO:0035435">
    <property type="term" value="P:phosphate ion transmembrane transport"/>
    <property type="evidence" value="ECO:0007669"/>
    <property type="project" value="InterPro"/>
</dbReference>
<dbReference type="CDD" id="cd03260">
    <property type="entry name" value="ABC_PstB_phosphate_transporter"/>
    <property type="match status" value="1"/>
</dbReference>
<dbReference type="Gene3D" id="3.40.50.300">
    <property type="entry name" value="P-loop containing nucleotide triphosphate hydrolases"/>
    <property type="match status" value="1"/>
</dbReference>
<dbReference type="InterPro" id="IPR003593">
    <property type="entry name" value="AAA+_ATPase"/>
</dbReference>
<dbReference type="InterPro" id="IPR003439">
    <property type="entry name" value="ABC_transporter-like_ATP-bd"/>
</dbReference>
<dbReference type="InterPro" id="IPR017871">
    <property type="entry name" value="ABC_transporter-like_CS"/>
</dbReference>
<dbReference type="InterPro" id="IPR027417">
    <property type="entry name" value="P-loop_NTPase"/>
</dbReference>
<dbReference type="InterPro" id="IPR005670">
    <property type="entry name" value="PstB-like"/>
</dbReference>
<dbReference type="NCBIfam" id="TIGR00972">
    <property type="entry name" value="3a0107s01c2"/>
    <property type="match status" value="1"/>
</dbReference>
<dbReference type="PANTHER" id="PTHR43423">
    <property type="entry name" value="ABC TRANSPORTER I FAMILY MEMBER 17"/>
    <property type="match status" value="1"/>
</dbReference>
<dbReference type="PANTHER" id="PTHR43423:SF1">
    <property type="entry name" value="ABC TRANSPORTER I FAMILY MEMBER 17"/>
    <property type="match status" value="1"/>
</dbReference>
<dbReference type="Pfam" id="PF00005">
    <property type="entry name" value="ABC_tran"/>
    <property type="match status" value="1"/>
</dbReference>
<dbReference type="SMART" id="SM00382">
    <property type="entry name" value="AAA"/>
    <property type="match status" value="1"/>
</dbReference>
<dbReference type="SUPFAM" id="SSF52540">
    <property type="entry name" value="P-loop containing nucleoside triphosphate hydrolases"/>
    <property type="match status" value="1"/>
</dbReference>
<dbReference type="PROSITE" id="PS00211">
    <property type="entry name" value="ABC_TRANSPORTER_1"/>
    <property type="match status" value="1"/>
</dbReference>
<dbReference type="PROSITE" id="PS50893">
    <property type="entry name" value="ABC_TRANSPORTER_2"/>
    <property type="match status" value="1"/>
</dbReference>
<dbReference type="PROSITE" id="PS51238">
    <property type="entry name" value="PSTB"/>
    <property type="match status" value="1"/>
</dbReference>
<name>PSTB_NITEU</name>
<reference key="1">
    <citation type="journal article" date="2003" name="J. Bacteriol.">
        <title>Complete genome sequence of the ammonia-oxidizing bacterium and obligate chemolithoautotroph Nitrosomonas europaea.</title>
        <authorList>
            <person name="Chain P."/>
            <person name="Lamerdin J.E."/>
            <person name="Larimer F.W."/>
            <person name="Regala W."/>
            <person name="Lao V."/>
            <person name="Land M.L."/>
            <person name="Hauser L."/>
            <person name="Hooper A.B."/>
            <person name="Klotz M.G."/>
            <person name="Norton J."/>
            <person name="Sayavedra-Soto L.A."/>
            <person name="Arciero D.M."/>
            <person name="Hommes N.G."/>
            <person name="Whittaker M.M."/>
            <person name="Arp D.J."/>
        </authorList>
    </citation>
    <scope>NUCLEOTIDE SEQUENCE [LARGE SCALE GENOMIC DNA]</scope>
    <source>
        <strain>ATCC 19718 / CIP 103999 / KCTC 2705 / NBRC 14298</strain>
    </source>
</reference>